<keyword id="KW-0030">Aminoacyl-tRNA synthetase</keyword>
<keyword id="KW-0067">ATP-binding</keyword>
<keyword id="KW-0175">Coiled coil</keyword>
<keyword id="KW-0963">Cytoplasm</keyword>
<keyword id="KW-0436">Ligase</keyword>
<keyword id="KW-0547">Nucleotide-binding</keyword>
<keyword id="KW-0648">Protein biosynthesis</keyword>
<sequence>MLQQNNEQLLNLLPDKMMEKTFNPTDIEQSLYTSWEEQGYFSPTGEGDSYSIAIPPPNVTGSLHMGHAFQQTIMDTLIRYQRMQGKNTLWQTGCDHAGIATQMVVERKIAAEEDKTRHDYGREGFIDKIWEWKEESGGTIGKQMRRLGNSIDWSRERFTMDDGMSEAVQEVFVRLFEDDLIYRGKRLVNWDPKFHTAISDLEVENKDKKGHMWHLRYPLANGAKTAEGLDYLVVATTRPETMLGDTGVAVNPEDPRYKDLIGKQVLLPLVNRLIPIVGDDHADMEKGTGCVKITPGHDFNDNEVGKRHALPQINILDKDAAILATAEVYDTKGEVCNAYDTGLPSEFAGMDRFVARKAIVAKFDELGLLVEVKDHDLVAPYGDRSGVIIEPLLTDQWYVRVEKLAGPAVDAVKDGQIEFVPKQYENMYFSWMNNIQDWCISRQLWWGHRIPAWYDENEKVYVGRTEEEVRANNDIAADMKLRQDDDVLDTWFSSALWTFSTLGWPKDTEDLKTFHPTDVLVTGFDIIFFWVARMIMMTMHFNKDENGKAQIPFKKIYMTGLIRDENGDKMSKSKGNVVDPLDMIDGISLEDLLQKRTGNMMQPKLAKKIEKLTRKEYPEGIEAHGTDALRFTLTSVATTGRDISWDMKRLEGYRNFTNKLWNASRYVMMNTEEFDCGQSSPEGKAGDMELSLADRWIIGQFEQTVKTVHEAFDTYRFDLASQALYEFTWNQFCDWYLELTKPVLFKENEAQQRGTRHTLVNVLEALLRLMHPIMPFITETIWQRVQPLSDFSKNGDSIMVQAFPQFDESKCDQQAIDDLEWVKQFIIAIRNIRGEMDISPSKELPVLLKNVNDNDQRRLDENEQFLSSLAKLESITVLADDEQGPASASAVVGDLSVLIPMAGLIDKEAELARLDKAIEKLEKEAGRVRGKLGNENFVSKAPAAVIEKEQAKLADAESTLAKILEQKIQIAAL</sequence>
<protein>
    <recommendedName>
        <fullName evidence="1">Valine--tRNA ligase</fullName>
        <ecNumber evidence="1">6.1.1.9</ecNumber>
    </recommendedName>
    <alternativeName>
        <fullName evidence="1">Valyl-tRNA synthetase</fullName>
        <shortName evidence="1">ValRS</shortName>
    </alternativeName>
</protein>
<proteinExistence type="inferred from homology"/>
<organism>
    <name type="scientific">Colwellia psychrerythraea (strain 34H / ATCC BAA-681)</name>
    <name type="common">Vibrio psychroerythus</name>
    <dbReference type="NCBI Taxonomy" id="167879"/>
    <lineage>
        <taxon>Bacteria</taxon>
        <taxon>Pseudomonadati</taxon>
        <taxon>Pseudomonadota</taxon>
        <taxon>Gammaproteobacteria</taxon>
        <taxon>Alteromonadales</taxon>
        <taxon>Colwelliaceae</taxon>
        <taxon>Colwellia</taxon>
    </lineage>
</organism>
<gene>
    <name evidence="1" type="primary">valS</name>
    <name type="ordered locus">CPS_0738</name>
</gene>
<reference key="1">
    <citation type="journal article" date="2005" name="Proc. Natl. Acad. Sci. U.S.A.">
        <title>The psychrophilic lifestyle as revealed by the genome sequence of Colwellia psychrerythraea 34H through genomic and proteomic analyses.</title>
        <authorList>
            <person name="Methe B.A."/>
            <person name="Nelson K.E."/>
            <person name="Deming J.W."/>
            <person name="Momen B."/>
            <person name="Melamud E."/>
            <person name="Zhang X."/>
            <person name="Moult J."/>
            <person name="Madupu R."/>
            <person name="Nelson W.C."/>
            <person name="Dodson R.J."/>
            <person name="Brinkac L.M."/>
            <person name="Daugherty S.C."/>
            <person name="Durkin A.S."/>
            <person name="DeBoy R.T."/>
            <person name="Kolonay J.F."/>
            <person name="Sullivan S.A."/>
            <person name="Zhou L."/>
            <person name="Davidsen T.M."/>
            <person name="Wu M."/>
            <person name="Huston A.L."/>
            <person name="Lewis M."/>
            <person name="Weaver B."/>
            <person name="Weidman J.F."/>
            <person name="Khouri H."/>
            <person name="Utterback T.R."/>
            <person name="Feldblyum T.V."/>
            <person name="Fraser C.M."/>
        </authorList>
    </citation>
    <scope>NUCLEOTIDE SEQUENCE [LARGE SCALE GENOMIC DNA]</scope>
    <source>
        <strain>34H / ATCC BAA-681</strain>
    </source>
</reference>
<comment type="function">
    <text evidence="1">Catalyzes the attachment of valine to tRNA(Val). As ValRS can inadvertently accommodate and process structurally similar amino acids such as threonine, to avoid such errors, it has a 'posttransfer' editing activity that hydrolyzes mischarged Thr-tRNA(Val) in a tRNA-dependent manner.</text>
</comment>
<comment type="catalytic activity">
    <reaction evidence="1">
        <text>tRNA(Val) + L-valine + ATP = L-valyl-tRNA(Val) + AMP + diphosphate</text>
        <dbReference type="Rhea" id="RHEA:10704"/>
        <dbReference type="Rhea" id="RHEA-COMP:9672"/>
        <dbReference type="Rhea" id="RHEA-COMP:9708"/>
        <dbReference type="ChEBI" id="CHEBI:30616"/>
        <dbReference type="ChEBI" id="CHEBI:33019"/>
        <dbReference type="ChEBI" id="CHEBI:57762"/>
        <dbReference type="ChEBI" id="CHEBI:78442"/>
        <dbReference type="ChEBI" id="CHEBI:78537"/>
        <dbReference type="ChEBI" id="CHEBI:456215"/>
        <dbReference type="EC" id="6.1.1.9"/>
    </reaction>
</comment>
<comment type="subunit">
    <text evidence="1">Monomer.</text>
</comment>
<comment type="subcellular location">
    <subcellularLocation>
        <location evidence="1">Cytoplasm</location>
    </subcellularLocation>
</comment>
<comment type="domain">
    <text evidence="1">ValRS has two distinct active sites: one for aminoacylation and one for editing. The misactivated threonine is translocated from the active site to the editing site.</text>
</comment>
<comment type="domain">
    <text evidence="1">The C-terminal coiled-coil domain is crucial for aminoacylation activity.</text>
</comment>
<comment type="similarity">
    <text evidence="1">Belongs to the class-I aminoacyl-tRNA synthetase family. ValS type 1 subfamily.</text>
</comment>
<feature type="chain" id="PRO_0000224464" description="Valine--tRNA ligase">
    <location>
        <begin position="1"/>
        <end position="973"/>
    </location>
</feature>
<feature type="coiled-coil region" evidence="1">
    <location>
        <begin position="901"/>
        <end position="970"/>
    </location>
</feature>
<feature type="short sequence motif" description="'HIGH' region">
    <location>
        <begin position="57"/>
        <end position="67"/>
    </location>
</feature>
<feature type="short sequence motif" description="'KMSKS' region">
    <location>
        <begin position="569"/>
        <end position="573"/>
    </location>
</feature>
<feature type="binding site" evidence="1">
    <location>
        <position position="572"/>
    </location>
    <ligand>
        <name>ATP</name>
        <dbReference type="ChEBI" id="CHEBI:30616"/>
    </ligand>
</feature>
<dbReference type="EC" id="6.1.1.9" evidence="1"/>
<dbReference type="EMBL" id="CP000083">
    <property type="protein sequence ID" value="AAZ27693.1"/>
    <property type="molecule type" value="Genomic_DNA"/>
</dbReference>
<dbReference type="SMR" id="Q488M6"/>
<dbReference type="STRING" id="167879.CPS_0738"/>
<dbReference type="KEGG" id="cps:CPS_0738"/>
<dbReference type="eggNOG" id="COG0525">
    <property type="taxonomic scope" value="Bacteria"/>
</dbReference>
<dbReference type="HOGENOM" id="CLU_001493_0_2_6"/>
<dbReference type="Proteomes" id="UP000000547">
    <property type="component" value="Chromosome"/>
</dbReference>
<dbReference type="GO" id="GO:0005829">
    <property type="term" value="C:cytosol"/>
    <property type="evidence" value="ECO:0007669"/>
    <property type="project" value="TreeGrafter"/>
</dbReference>
<dbReference type="GO" id="GO:0002161">
    <property type="term" value="F:aminoacyl-tRNA deacylase activity"/>
    <property type="evidence" value="ECO:0007669"/>
    <property type="project" value="InterPro"/>
</dbReference>
<dbReference type="GO" id="GO:0005524">
    <property type="term" value="F:ATP binding"/>
    <property type="evidence" value="ECO:0007669"/>
    <property type="project" value="UniProtKB-UniRule"/>
</dbReference>
<dbReference type="GO" id="GO:0004832">
    <property type="term" value="F:valine-tRNA ligase activity"/>
    <property type="evidence" value="ECO:0007669"/>
    <property type="project" value="UniProtKB-UniRule"/>
</dbReference>
<dbReference type="GO" id="GO:0006438">
    <property type="term" value="P:valyl-tRNA aminoacylation"/>
    <property type="evidence" value="ECO:0007669"/>
    <property type="project" value="UniProtKB-UniRule"/>
</dbReference>
<dbReference type="CDD" id="cd07962">
    <property type="entry name" value="Anticodon_Ia_Val"/>
    <property type="match status" value="1"/>
</dbReference>
<dbReference type="CDD" id="cd00817">
    <property type="entry name" value="ValRS_core"/>
    <property type="match status" value="1"/>
</dbReference>
<dbReference type="FunFam" id="1.10.287.380:FF:000001">
    <property type="entry name" value="Valine--tRNA ligase"/>
    <property type="match status" value="1"/>
</dbReference>
<dbReference type="FunFam" id="1.10.730.10:FF:000007">
    <property type="entry name" value="Valine--tRNA ligase"/>
    <property type="match status" value="1"/>
</dbReference>
<dbReference type="FunFam" id="3.40.50.620:FF:000032">
    <property type="entry name" value="Valine--tRNA ligase"/>
    <property type="match status" value="1"/>
</dbReference>
<dbReference type="FunFam" id="3.40.50.620:FF:000146">
    <property type="entry name" value="Valine--tRNA ligase"/>
    <property type="match status" value="1"/>
</dbReference>
<dbReference type="FunFam" id="3.90.740.10:FF:000003">
    <property type="entry name" value="Valine--tRNA ligase"/>
    <property type="match status" value="1"/>
</dbReference>
<dbReference type="FunFam" id="3.90.740.10:FF:000004">
    <property type="entry name" value="Valine--tRNA ligase"/>
    <property type="match status" value="1"/>
</dbReference>
<dbReference type="Gene3D" id="3.40.50.620">
    <property type="entry name" value="HUPs"/>
    <property type="match status" value="2"/>
</dbReference>
<dbReference type="Gene3D" id="1.10.730.10">
    <property type="entry name" value="Isoleucyl-tRNA Synthetase, Domain 1"/>
    <property type="match status" value="1"/>
</dbReference>
<dbReference type="Gene3D" id="1.10.287.380">
    <property type="entry name" value="Valyl-tRNA synthetase, C-terminal domain"/>
    <property type="match status" value="1"/>
</dbReference>
<dbReference type="Gene3D" id="3.90.740.10">
    <property type="entry name" value="Valyl/Leucyl/Isoleucyl-tRNA synthetase, editing domain"/>
    <property type="match status" value="2"/>
</dbReference>
<dbReference type="HAMAP" id="MF_02004">
    <property type="entry name" value="Val_tRNA_synth_type1"/>
    <property type="match status" value="1"/>
</dbReference>
<dbReference type="InterPro" id="IPR001412">
    <property type="entry name" value="aa-tRNA-synth_I_CS"/>
</dbReference>
<dbReference type="InterPro" id="IPR002300">
    <property type="entry name" value="aa-tRNA-synth_Ia"/>
</dbReference>
<dbReference type="InterPro" id="IPR033705">
    <property type="entry name" value="Anticodon_Ia_Val"/>
</dbReference>
<dbReference type="InterPro" id="IPR013155">
    <property type="entry name" value="M/V/L/I-tRNA-synth_anticd-bd"/>
</dbReference>
<dbReference type="InterPro" id="IPR014729">
    <property type="entry name" value="Rossmann-like_a/b/a_fold"/>
</dbReference>
<dbReference type="InterPro" id="IPR010978">
    <property type="entry name" value="tRNA-bd_arm"/>
</dbReference>
<dbReference type="InterPro" id="IPR009080">
    <property type="entry name" value="tRNAsynth_Ia_anticodon-bd"/>
</dbReference>
<dbReference type="InterPro" id="IPR037118">
    <property type="entry name" value="Val-tRNA_synth_C_sf"/>
</dbReference>
<dbReference type="InterPro" id="IPR019499">
    <property type="entry name" value="Val-tRNA_synth_tRNA-bd"/>
</dbReference>
<dbReference type="InterPro" id="IPR009008">
    <property type="entry name" value="Val/Leu/Ile-tRNA-synth_edit"/>
</dbReference>
<dbReference type="InterPro" id="IPR002303">
    <property type="entry name" value="Valyl-tRNA_ligase"/>
</dbReference>
<dbReference type="NCBIfam" id="NF004349">
    <property type="entry name" value="PRK05729.1"/>
    <property type="match status" value="1"/>
</dbReference>
<dbReference type="NCBIfam" id="TIGR00422">
    <property type="entry name" value="valS"/>
    <property type="match status" value="1"/>
</dbReference>
<dbReference type="PANTHER" id="PTHR11946:SF93">
    <property type="entry name" value="VALINE--TRNA LIGASE, CHLOROPLASTIC_MITOCHONDRIAL 2"/>
    <property type="match status" value="1"/>
</dbReference>
<dbReference type="PANTHER" id="PTHR11946">
    <property type="entry name" value="VALYL-TRNA SYNTHETASES"/>
    <property type="match status" value="1"/>
</dbReference>
<dbReference type="Pfam" id="PF08264">
    <property type="entry name" value="Anticodon_1"/>
    <property type="match status" value="1"/>
</dbReference>
<dbReference type="Pfam" id="PF00133">
    <property type="entry name" value="tRNA-synt_1"/>
    <property type="match status" value="1"/>
</dbReference>
<dbReference type="Pfam" id="PF10458">
    <property type="entry name" value="Val_tRNA-synt_C"/>
    <property type="match status" value="1"/>
</dbReference>
<dbReference type="PRINTS" id="PR00986">
    <property type="entry name" value="TRNASYNTHVAL"/>
</dbReference>
<dbReference type="SUPFAM" id="SSF47323">
    <property type="entry name" value="Anticodon-binding domain of a subclass of class I aminoacyl-tRNA synthetases"/>
    <property type="match status" value="1"/>
</dbReference>
<dbReference type="SUPFAM" id="SSF52374">
    <property type="entry name" value="Nucleotidylyl transferase"/>
    <property type="match status" value="1"/>
</dbReference>
<dbReference type="SUPFAM" id="SSF46589">
    <property type="entry name" value="tRNA-binding arm"/>
    <property type="match status" value="1"/>
</dbReference>
<dbReference type="SUPFAM" id="SSF50677">
    <property type="entry name" value="ValRS/IleRS/LeuRS editing domain"/>
    <property type="match status" value="1"/>
</dbReference>
<dbReference type="PROSITE" id="PS00178">
    <property type="entry name" value="AA_TRNA_LIGASE_I"/>
    <property type="match status" value="1"/>
</dbReference>
<name>SYV_COLP3</name>
<accession>Q488M6</accession>
<evidence type="ECO:0000255" key="1">
    <source>
        <dbReference type="HAMAP-Rule" id="MF_02004"/>
    </source>
</evidence>